<sequence length="325" mass="37987">MSHGEETELLLDPKEERFVLLPIKYHDIWKMYKKAESSFWTVEEVSLDKDIDDWGKLNAKERHFISYVLAFFAASDGIVNLNLVERFSTEVKVLEARFFYGFQMAIENIHSEMYSLLIDTYIRDNDEKNFLFDAIRTIPSVKEKADWAIRWIEDKNSDFATRLVAFACVEGIFFSGAFASIFWLKKRGLMPGLTFSNELISRDEGLHCEFACLLHYHLKKKCNRIKEVVMDAVEIEKKFLSESLPVNLIGMNCNLMCRYIEFVADRLLENLGEERVYNATNPFDFMENISLVGKTNFFDKRESQYQKAFVGIENGNDSFRIDVDF</sequence>
<evidence type="ECO:0000250" key="1"/>
<evidence type="ECO:0000255" key="2">
    <source>
        <dbReference type="PROSITE-ProRule" id="PRU10014"/>
    </source>
</evidence>
<evidence type="ECO:0000305" key="3"/>
<dbReference type="EC" id="1.17.4.1"/>
<dbReference type="EMBL" id="AL590446">
    <property type="protein sequence ID" value="CAD25433.1"/>
    <property type="molecule type" value="Genomic_DNA"/>
</dbReference>
<dbReference type="RefSeq" id="NP_585829.1">
    <property type="nucleotide sequence ID" value="NM_001041451.1"/>
</dbReference>
<dbReference type="SMR" id="Q8SRR2"/>
<dbReference type="FunCoup" id="Q8SRR2">
    <property type="interactions" value="80"/>
</dbReference>
<dbReference type="STRING" id="284813.Q8SRR2"/>
<dbReference type="GeneID" id="859253"/>
<dbReference type="KEGG" id="ecu:ECU06_0730"/>
<dbReference type="VEuPathDB" id="MicrosporidiaDB:ECU06_0730"/>
<dbReference type="HOGENOM" id="CLU_035339_2_2_1"/>
<dbReference type="InParanoid" id="Q8SRR2"/>
<dbReference type="OMA" id="SNPFPWM"/>
<dbReference type="OrthoDB" id="10248373at2759"/>
<dbReference type="Proteomes" id="UP000000819">
    <property type="component" value="Chromosome VI"/>
</dbReference>
<dbReference type="GO" id="GO:0046872">
    <property type="term" value="F:metal ion binding"/>
    <property type="evidence" value="ECO:0007669"/>
    <property type="project" value="UniProtKB-KW"/>
</dbReference>
<dbReference type="GO" id="GO:0004748">
    <property type="term" value="F:ribonucleoside-diphosphate reductase activity, thioredoxin disulfide as acceptor"/>
    <property type="evidence" value="ECO:0007669"/>
    <property type="project" value="UniProtKB-EC"/>
</dbReference>
<dbReference type="GO" id="GO:0009263">
    <property type="term" value="P:deoxyribonucleotide biosynthetic process"/>
    <property type="evidence" value="ECO:0007669"/>
    <property type="project" value="UniProtKB-KW"/>
</dbReference>
<dbReference type="CDD" id="cd01049">
    <property type="entry name" value="RNRR2"/>
    <property type="match status" value="1"/>
</dbReference>
<dbReference type="Gene3D" id="1.10.620.20">
    <property type="entry name" value="Ribonucleotide Reductase, subunit A"/>
    <property type="match status" value="1"/>
</dbReference>
<dbReference type="InterPro" id="IPR009078">
    <property type="entry name" value="Ferritin-like_SF"/>
</dbReference>
<dbReference type="InterPro" id="IPR012348">
    <property type="entry name" value="RNR-like"/>
</dbReference>
<dbReference type="InterPro" id="IPR033909">
    <property type="entry name" value="RNR_small"/>
</dbReference>
<dbReference type="InterPro" id="IPR030475">
    <property type="entry name" value="RNR_small_AS"/>
</dbReference>
<dbReference type="InterPro" id="IPR000358">
    <property type="entry name" value="RNR_small_fam"/>
</dbReference>
<dbReference type="PANTHER" id="PTHR23409">
    <property type="entry name" value="RIBONUCLEOSIDE-DIPHOSPHATE REDUCTASE SMALL CHAIN"/>
    <property type="match status" value="1"/>
</dbReference>
<dbReference type="PANTHER" id="PTHR23409:SF18">
    <property type="entry name" value="RIBONUCLEOSIDE-DIPHOSPHATE REDUCTASE SUBUNIT M2"/>
    <property type="match status" value="1"/>
</dbReference>
<dbReference type="Pfam" id="PF00268">
    <property type="entry name" value="Ribonuc_red_sm"/>
    <property type="match status" value="1"/>
</dbReference>
<dbReference type="SUPFAM" id="SSF47240">
    <property type="entry name" value="Ferritin-like"/>
    <property type="match status" value="1"/>
</dbReference>
<dbReference type="PROSITE" id="PS00368">
    <property type="entry name" value="RIBORED_SMALL"/>
    <property type="match status" value="1"/>
</dbReference>
<keyword id="KW-0215">Deoxyribonucleotide synthesis</keyword>
<keyword id="KW-0408">Iron</keyword>
<keyword id="KW-0479">Metal-binding</keyword>
<keyword id="KW-0560">Oxidoreductase</keyword>
<keyword id="KW-1185">Reference proteome</keyword>
<accession>Q8SRR2</accession>
<comment type="function">
    <text evidence="1">Provides the precursors necessary for DNA synthesis. Catalyzes the biosynthesis of deoxyribonucleotides from the corresponding ribonucleotides (By similarity).</text>
</comment>
<comment type="catalytic activity">
    <reaction evidence="2">
        <text>a 2'-deoxyribonucleoside 5'-diphosphate + [thioredoxin]-disulfide + H2O = a ribonucleoside 5'-diphosphate + [thioredoxin]-dithiol</text>
        <dbReference type="Rhea" id="RHEA:23252"/>
        <dbReference type="Rhea" id="RHEA-COMP:10698"/>
        <dbReference type="Rhea" id="RHEA-COMP:10700"/>
        <dbReference type="ChEBI" id="CHEBI:15377"/>
        <dbReference type="ChEBI" id="CHEBI:29950"/>
        <dbReference type="ChEBI" id="CHEBI:50058"/>
        <dbReference type="ChEBI" id="CHEBI:57930"/>
        <dbReference type="ChEBI" id="CHEBI:73316"/>
        <dbReference type="EC" id="1.17.4.1"/>
    </reaction>
</comment>
<comment type="cofactor">
    <cofactor evidence="1">
        <name>Fe cation</name>
        <dbReference type="ChEBI" id="CHEBI:24875"/>
    </cofactor>
    <text evidence="1">Binds 2 iron ions per subunit.</text>
</comment>
<comment type="subunit">
    <text evidence="1">Heterodimer of a large and a small subunit.</text>
</comment>
<comment type="similarity">
    <text evidence="3">Belongs to the ribonucleoside diphosphate reductase small chain family.</text>
</comment>
<name>RIR2_ENCCU</name>
<gene>
    <name type="ordered locus">ECU06_0730</name>
</gene>
<feature type="chain" id="PRO_0000190461" description="Ribonucleoside-diphosphate reductase small chain">
    <location>
        <begin position="1"/>
        <end position="325"/>
    </location>
</feature>
<feature type="active site" evidence="2">
    <location>
        <position position="114"/>
    </location>
</feature>
<feature type="binding site" evidence="2">
    <location>
        <position position="76"/>
    </location>
    <ligand>
        <name>Fe cation</name>
        <dbReference type="ChEBI" id="CHEBI:24875"/>
        <label>1</label>
    </ligand>
</feature>
<feature type="binding site" evidence="2">
    <location>
        <position position="107"/>
    </location>
    <ligand>
        <name>Fe cation</name>
        <dbReference type="ChEBI" id="CHEBI:24875"/>
        <label>1</label>
    </ligand>
</feature>
<feature type="binding site" evidence="1">
    <location>
        <position position="107"/>
    </location>
    <ligand>
        <name>Fe cation</name>
        <dbReference type="ChEBI" id="CHEBI:24875"/>
        <label>2</label>
    </ligand>
</feature>
<feature type="binding site" evidence="2">
    <location>
        <position position="110"/>
    </location>
    <ligand>
        <name>Fe cation</name>
        <dbReference type="ChEBI" id="CHEBI:24875"/>
        <label>1</label>
    </ligand>
</feature>
<feature type="binding site" evidence="1">
    <location>
        <position position="170"/>
    </location>
    <ligand>
        <name>Fe cation</name>
        <dbReference type="ChEBI" id="CHEBI:24875"/>
        <label>2</label>
    </ligand>
</feature>
<feature type="binding site" evidence="1">
    <location>
        <position position="204"/>
    </location>
    <ligand>
        <name>Fe cation</name>
        <dbReference type="ChEBI" id="CHEBI:24875"/>
        <label>2</label>
    </ligand>
</feature>
<feature type="binding site" evidence="1">
    <location>
        <position position="207"/>
    </location>
    <ligand>
        <name>Fe cation</name>
        <dbReference type="ChEBI" id="CHEBI:24875"/>
        <label>2</label>
    </ligand>
</feature>
<proteinExistence type="inferred from homology"/>
<reference key="1">
    <citation type="journal article" date="2001" name="Nature">
        <title>Genome sequence and gene compaction of the eukaryote parasite Encephalitozoon cuniculi.</title>
        <authorList>
            <person name="Katinka M.D."/>
            <person name="Duprat S."/>
            <person name="Cornillot E."/>
            <person name="Metenier G."/>
            <person name="Thomarat F."/>
            <person name="Prensier G."/>
            <person name="Barbe V."/>
            <person name="Peyretaillade E."/>
            <person name="Brottier P."/>
            <person name="Wincker P."/>
            <person name="Delbac F."/>
            <person name="El Alaoui H."/>
            <person name="Peyret P."/>
            <person name="Saurin W."/>
            <person name="Gouy M."/>
            <person name="Weissenbach J."/>
            <person name="Vivares C.P."/>
        </authorList>
    </citation>
    <scope>NUCLEOTIDE SEQUENCE [LARGE SCALE GENOMIC DNA]</scope>
    <source>
        <strain>GB-M1</strain>
    </source>
</reference>
<organism>
    <name type="scientific">Encephalitozoon cuniculi (strain GB-M1)</name>
    <name type="common">Microsporidian parasite</name>
    <dbReference type="NCBI Taxonomy" id="284813"/>
    <lineage>
        <taxon>Eukaryota</taxon>
        <taxon>Fungi</taxon>
        <taxon>Fungi incertae sedis</taxon>
        <taxon>Microsporidia</taxon>
        <taxon>Unikaryonidae</taxon>
        <taxon>Encephalitozoon</taxon>
    </lineage>
</organism>
<protein>
    <recommendedName>
        <fullName>Ribonucleoside-diphosphate reductase small chain</fullName>
        <ecNumber>1.17.4.1</ecNumber>
    </recommendedName>
    <alternativeName>
        <fullName>Ribonucleotide reductase small subunit</fullName>
    </alternativeName>
</protein>